<keyword id="KW-0002">3D-structure</keyword>
<keyword id="KW-0325">Glycoprotein</keyword>
<keyword id="KW-0407">Ion channel</keyword>
<keyword id="KW-0406">Ion transport</keyword>
<keyword id="KW-0472">Membrane</keyword>
<keyword id="KW-1185">Reference proteome</keyword>
<keyword id="KW-0812">Transmembrane</keyword>
<keyword id="KW-1133">Transmembrane helix</keyword>
<keyword id="KW-0813">Transport</keyword>
<comment type="function">
    <text evidence="1">Probable ion channel.</text>
</comment>
<comment type="subcellular location">
    <subcellularLocation>
        <location evidence="5">Membrane</location>
        <topology evidence="5">Multi-pass membrane protein</topology>
    </subcellularLocation>
</comment>
<comment type="similarity">
    <text evidence="5">Belongs to the TMC family.</text>
</comment>
<name>TMC2_CAEEL</name>
<protein>
    <recommendedName>
        <fullName>Transmembrane channel-like protein 2</fullName>
    </recommendedName>
</protein>
<accession>Q11069</accession>
<proteinExistence type="evidence at protein level"/>
<feature type="chain" id="PRO_0000185388" description="Transmembrane channel-like protein 2">
    <location>
        <begin position="1"/>
        <end position="1203"/>
    </location>
</feature>
<feature type="transmembrane region" description="Helical" evidence="2">
    <location>
        <begin position="191"/>
        <end position="213"/>
    </location>
</feature>
<feature type="transmembrane region" description="Helical" evidence="2">
    <location>
        <begin position="276"/>
        <end position="298"/>
    </location>
</feature>
<feature type="transmembrane region" description="Helical" evidence="2">
    <location>
        <begin position="369"/>
        <end position="391"/>
    </location>
</feature>
<feature type="transmembrane region" description="Helical" evidence="2">
    <location>
        <begin position="406"/>
        <end position="428"/>
    </location>
</feature>
<feature type="transmembrane region" description="Helical" evidence="2">
    <location>
        <begin position="441"/>
        <end position="463"/>
    </location>
</feature>
<feature type="transmembrane region" description="Helical" evidence="2">
    <location>
        <begin position="665"/>
        <end position="687"/>
    </location>
</feature>
<feature type="transmembrane region" description="Helical" evidence="2">
    <location>
        <begin position="714"/>
        <end position="736"/>
    </location>
</feature>
<feature type="transmembrane region" description="Helical" evidence="2">
    <location>
        <begin position="780"/>
        <end position="802"/>
    </location>
</feature>
<feature type="region of interest" description="Disordered" evidence="3">
    <location>
        <begin position="1"/>
        <end position="39"/>
    </location>
</feature>
<feature type="region of interest" description="Disordered" evidence="3">
    <location>
        <begin position="64"/>
        <end position="90"/>
    </location>
</feature>
<feature type="region of interest" description="Disordered" evidence="3">
    <location>
        <begin position="826"/>
        <end position="908"/>
    </location>
</feature>
<feature type="region of interest" description="Disordered" evidence="3">
    <location>
        <begin position="927"/>
        <end position="1039"/>
    </location>
</feature>
<feature type="region of interest" description="Disordered" evidence="3">
    <location>
        <begin position="1059"/>
        <end position="1087"/>
    </location>
</feature>
<feature type="region of interest" description="Disordered" evidence="3">
    <location>
        <begin position="1112"/>
        <end position="1203"/>
    </location>
</feature>
<feature type="compositionally biased region" description="Acidic residues" evidence="3">
    <location>
        <begin position="73"/>
        <end position="86"/>
    </location>
</feature>
<feature type="compositionally biased region" description="Polar residues" evidence="3">
    <location>
        <begin position="865"/>
        <end position="874"/>
    </location>
</feature>
<feature type="compositionally biased region" description="Low complexity" evidence="3">
    <location>
        <begin position="898"/>
        <end position="908"/>
    </location>
</feature>
<feature type="compositionally biased region" description="Basic and acidic residues" evidence="3">
    <location>
        <begin position="927"/>
        <end position="945"/>
    </location>
</feature>
<feature type="compositionally biased region" description="Low complexity" evidence="3">
    <location>
        <begin position="973"/>
        <end position="997"/>
    </location>
</feature>
<feature type="compositionally biased region" description="Low complexity" evidence="3">
    <location>
        <begin position="1022"/>
        <end position="1035"/>
    </location>
</feature>
<feature type="compositionally biased region" description="Polar residues" evidence="3">
    <location>
        <begin position="1061"/>
        <end position="1076"/>
    </location>
</feature>
<feature type="compositionally biased region" description="Basic and acidic residues" evidence="3">
    <location>
        <begin position="1133"/>
        <end position="1147"/>
    </location>
</feature>
<feature type="compositionally biased region" description="Basic and acidic residues" evidence="3">
    <location>
        <begin position="1172"/>
        <end position="1203"/>
    </location>
</feature>
<feature type="glycosylation site" description="N-linked (GlcNAc...) asparagine" evidence="4">
    <location>
        <position position="225"/>
    </location>
</feature>
<feature type="glycosylation site" description="N-linked (GlcNAc...) asparagine" evidence="4">
    <location>
        <position position="748"/>
    </location>
</feature>
<reference key="1">
    <citation type="journal article" date="1998" name="Science">
        <title>Genome sequence of the nematode C. elegans: a platform for investigating biology.</title>
        <authorList>
            <consortium name="The C. elegans sequencing consortium"/>
        </authorList>
    </citation>
    <scope>NUCLEOTIDE SEQUENCE [LARGE SCALE GENOMIC DNA]</scope>
    <source>
        <strain>Bristol N2</strain>
    </source>
</reference>
<reference key="2">
    <citation type="journal article" date="2007" name="Mol. Cell. Proteomics">
        <title>Proteomics reveals N-linked glycoprotein diversity in Caenorhabditis elegans and suggests an atypical translocation mechanism for integral membrane proteins.</title>
        <authorList>
            <person name="Kaji H."/>
            <person name="Kamiie J."/>
            <person name="Kawakami H."/>
            <person name="Kido K."/>
            <person name="Yamauchi Y."/>
            <person name="Shinkawa T."/>
            <person name="Taoka M."/>
            <person name="Takahashi N."/>
            <person name="Isobe T."/>
        </authorList>
    </citation>
    <scope>GLYCOSYLATION [LARGE SCALE ANALYSIS] AT ASN-225 AND ASN-748</scope>
    <scope>IDENTIFICATION BY MASS SPECTROMETRY</scope>
    <source>
        <strain>Bristol N2</strain>
    </source>
</reference>
<sequence>MPKSGAHQPLVRHDTDDGGETGQSVKSLADVSEEEIDSRMSRRSSVIADLLSLFRRSSSVLVRPHTRLGNPNFDDDDDEFDEEDDKEASKDRILKKIQQKKEIIQKLRGQPWYMKRKRRTLKVAQKHLQQQEAKVSKARLYKAEAGRRLTQASRWLDNLKIYLIPWEAKIRKIESHFGSVVSSYFTFHRWVLGVNITITFIMCMFVVIPEWLADSRTQFGDDRYNKTKAIKVMPPAVRARADELSTVWDFGGYFQYSLLFYGFYSKETFFGETIKYRVPVAYFFCNIFILGFSLFIILRKMAANNRRGTLSSGKTQQYLFNWKAFTGWDYTIGNPETAGNVYMANVIKFREAINDDKQKPSDKHPWIRFVARVLTNLFICAMYVFSIWAIMQCGTLKGEHFFAQNATAITISLITLVFPNIFDLLGKIEKLHPRNALRFQLGRVLVLYILNYYTLIYSLMLQLEHLQKEKNASDNPISALGHPGDAIGRTIRETVLPRYPVDNNPHTYYSYAPVTTTPIPATSSWTTVLPDFGPFGVYNPKASVTKDDTVFSSPVVETHMFGPNSDWNETTVNAASPTGATTRASLRMSQGGLCWETIIGQEITKLVTMDLYMTVASIFLIDFLRGLACRYLNLYWPWDLERTFPEYGEFKVAENVLHLVNNQGMIWLGLFFVPLLPMLNNIKLIILMYIRGWAAMTCNVPASQIFRASRSSNFFFALLILFLFLCTLPVGFVIASKTPSKSCGPFGNQSFFYSVITDVLHENLDKTLVNGIKYSLSPGIIIPVLVLLSLVIYFLIAMVTGLSQANQDLSFQLMVERTEEKKKIFELAGGKKKKSKDNTFGKQKPKQLLPPPTKGVSSDDDSQHNRSTAKSVSGRQFVPSLGSVSEVDHSTGEEQSSDSESTTSSLPPKLSLRQRFLVCIGWADPNKYGRHDDIEMEEGGGRLRELSTGSETDSDDEDSEKSNRDMSYRTAIQSFDQNSQSASASSSKSTTTAPSNSEMRIEITENPLHTYITPLRIEKKSSASSSSSSHQPSSSIEKQAARRLLQPISTTHNIRYGVATVENSSQDPTRPPSTDDSLGDPALHEPLWANLNPHSSYTSAMMSPIMNEVMSNDETTDDEKGRLIPDRPPIPHSPRELKRLKREKDQQSESGSKPSTPRPPRFRISMSPPRKPPSEKNDSDSSNRKYEMRVEKSPKKPKKSDND</sequence>
<organism>
    <name type="scientific">Caenorhabditis elegans</name>
    <dbReference type="NCBI Taxonomy" id="6239"/>
    <lineage>
        <taxon>Eukaryota</taxon>
        <taxon>Metazoa</taxon>
        <taxon>Ecdysozoa</taxon>
        <taxon>Nematoda</taxon>
        <taxon>Chromadorea</taxon>
        <taxon>Rhabditida</taxon>
        <taxon>Rhabditina</taxon>
        <taxon>Rhabditomorpha</taxon>
        <taxon>Rhabditoidea</taxon>
        <taxon>Rhabditidae</taxon>
        <taxon>Peloderinae</taxon>
        <taxon>Caenorhabditis</taxon>
    </lineage>
</organism>
<dbReference type="EMBL" id="FO080200">
    <property type="protein sequence ID" value="CCD61919.1"/>
    <property type="molecule type" value="Genomic_DNA"/>
</dbReference>
<dbReference type="PIR" id="H89606">
    <property type="entry name" value="H89606"/>
</dbReference>
<dbReference type="RefSeq" id="NP_001335510.1">
    <property type="nucleotide sequence ID" value="NM_001348601.1"/>
</dbReference>
<dbReference type="PDB" id="8TKP">
    <property type="method" value="EM"/>
    <property type="resolution" value="2.90 A"/>
    <property type="chains" value="A/D=1-1203"/>
</dbReference>
<dbReference type="PDBsum" id="8TKP"/>
<dbReference type="EMDB" id="EMD-41356"/>
<dbReference type="EMDB" id="EMD-41432"/>
<dbReference type="SMR" id="Q11069"/>
<dbReference type="BioGRID" id="46077">
    <property type="interactions" value="2"/>
</dbReference>
<dbReference type="FunCoup" id="Q11069">
    <property type="interactions" value="18"/>
</dbReference>
<dbReference type="STRING" id="6239.B0416.1a.1"/>
<dbReference type="TCDB" id="1.A.17.4.19">
    <property type="family name" value="the calcium-dependent chloride channel (ca-clc) family"/>
</dbReference>
<dbReference type="TCDB" id="1.A.17.4.8">
    <property type="family name" value="the calcium-dependent chloride channel (ca-clc) family"/>
</dbReference>
<dbReference type="GlyCosmos" id="Q11069">
    <property type="glycosylation" value="2 sites, No reported glycans"/>
</dbReference>
<dbReference type="iPTMnet" id="Q11069"/>
<dbReference type="PaxDb" id="6239-B0416.1"/>
<dbReference type="PeptideAtlas" id="Q11069"/>
<dbReference type="EnsemblMetazoa" id="B0416.1a.1">
    <property type="protein sequence ID" value="B0416.1a.1"/>
    <property type="gene ID" value="WBGene00015177"/>
</dbReference>
<dbReference type="GeneID" id="181161"/>
<dbReference type="KEGG" id="cel:CELE_B0416.1"/>
<dbReference type="UCSC" id="B0416.1">
    <property type="organism name" value="c. elegans"/>
</dbReference>
<dbReference type="AGR" id="WB:WBGene00015177"/>
<dbReference type="CTD" id="181161"/>
<dbReference type="WormBase" id="B0416.1a">
    <property type="protein sequence ID" value="CE51844"/>
    <property type="gene ID" value="WBGene00015177"/>
    <property type="gene designation" value="tmc-2"/>
</dbReference>
<dbReference type="eggNOG" id="ENOG502QQGX">
    <property type="taxonomic scope" value="Eukaryota"/>
</dbReference>
<dbReference type="GeneTree" id="ENSGT01050000244894"/>
<dbReference type="HOGENOM" id="CLU_272172_0_0_1"/>
<dbReference type="InParanoid" id="Q11069"/>
<dbReference type="OMA" id="KYEMRVE"/>
<dbReference type="OrthoDB" id="5831905at2759"/>
<dbReference type="PhylomeDB" id="Q11069"/>
<dbReference type="PRO" id="PR:Q11069"/>
<dbReference type="Proteomes" id="UP000001940">
    <property type="component" value="Chromosome X"/>
</dbReference>
<dbReference type="Bgee" id="WBGene00015177">
    <property type="expression patterns" value="Expressed in embryo and 3 other cell types or tissues"/>
</dbReference>
<dbReference type="ExpressionAtlas" id="Q11069">
    <property type="expression patterns" value="baseline and differential"/>
</dbReference>
<dbReference type="GO" id="GO:0005886">
    <property type="term" value="C:plasma membrane"/>
    <property type="evidence" value="ECO:0007669"/>
    <property type="project" value="InterPro"/>
</dbReference>
<dbReference type="GO" id="GO:0008381">
    <property type="term" value="F:mechanosensitive monoatomic ion channel activity"/>
    <property type="evidence" value="ECO:0000318"/>
    <property type="project" value="GO_Central"/>
</dbReference>
<dbReference type="InterPro" id="IPR038900">
    <property type="entry name" value="TMC"/>
</dbReference>
<dbReference type="InterPro" id="IPR012496">
    <property type="entry name" value="TMC_dom"/>
</dbReference>
<dbReference type="PANTHER" id="PTHR23302:SF65">
    <property type="entry name" value="TRANSMEMBRANE CHANNEL-LIKE PROTEIN 2"/>
    <property type="match status" value="1"/>
</dbReference>
<dbReference type="PANTHER" id="PTHR23302">
    <property type="entry name" value="TRANSMEMBRANE CHANNEL-RELATED"/>
    <property type="match status" value="1"/>
</dbReference>
<dbReference type="Pfam" id="PF07810">
    <property type="entry name" value="TMC"/>
    <property type="match status" value="1"/>
</dbReference>
<gene>
    <name type="primary">tmc-2</name>
    <name type="ORF">B0416.1</name>
</gene>
<evidence type="ECO:0000250" key="1"/>
<evidence type="ECO:0000255" key="2"/>
<evidence type="ECO:0000256" key="3">
    <source>
        <dbReference type="SAM" id="MobiDB-lite"/>
    </source>
</evidence>
<evidence type="ECO:0000269" key="4">
    <source>
    </source>
</evidence>
<evidence type="ECO:0000305" key="5"/>